<keyword id="KW-0067">ATP-binding</keyword>
<keyword id="KW-0418">Kinase</keyword>
<keyword id="KW-0547">Nucleotide-binding</keyword>
<keyword id="KW-1185">Reference proteome</keyword>
<keyword id="KW-0808">Transferase</keyword>
<evidence type="ECO:0000250" key="1"/>
<evidence type="ECO:0000255" key="2"/>
<evidence type="ECO:0000269" key="3">
    <source>
    </source>
</evidence>
<evidence type="ECO:0000269" key="4">
    <source>
    </source>
</evidence>
<evidence type="ECO:0000305" key="5"/>
<name>DCK_BACSU</name>
<organism>
    <name type="scientific">Bacillus subtilis (strain 168)</name>
    <dbReference type="NCBI Taxonomy" id="224308"/>
    <lineage>
        <taxon>Bacteria</taxon>
        <taxon>Bacillati</taxon>
        <taxon>Bacillota</taxon>
        <taxon>Bacilli</taxon>
        <taxon>Bacillales</taxon>
        <taxon>Bacillaceae</taxon>
        <taxon>Bacillus</taxon>
    </lineage>
</organism>
<accession>P37529</accession>
<comment type="function">
    <text evidence="4">Plays an essential role in generating the deoxyribonucleotide precursors dATP and dCTP for DNA metabolism. The phosphate acceptor specificity is strict toward deoxyadenosine (dAdo) and deoxycytidine (dCyd). The specificity toward the sugar moiety of the nucleoside is less strict. Both 2-deoxyribose, ribose, and arabinose nucleosides are phosphorylated, although the 2-deoxyribonucleosides are preferred. The phosphate donor specificity is dependent on the deoxyribonucleoside substrate, but GTP is efficient with both deoxycytidine and deoxyadenosine. Only nucleoside triphosphates can act as phosphate donors.</text>
</comment>
<comment type="catalytic activity">
    <reaction>
        <text>2'-deoxyadenosine + ATP = dAMP + ADP + H(+)</text>
        <dbReference type="Rhea" id="RHEA:23452"/>
        <dbReference type="ChEBI" id="CHEBI:15378"/>
        <dbReference type="ChEBI" id="CHEBI:17256"/>
        <dbReference type="ChEBI" id="CHEBI:30616"/>
        <dbReference type="ChEBI" id="CHEBI:58245"/>
        <dbReference type="ChEBI" id="CHEBI:456216"/>
        <dbReference type="EC" id="2.7.1.76"/>
    </reaction>
</comment>
<comment type="catalytic activity">
    <reaction>
        <text>2'-deoxycytidine + a ribonucleoside 5'-triphosphate = dCMP + a ribonucleoside 5'-diphosphate + H(+)</text>
        <dbReference type="Rhea" id="RHEA:20061"/>
        <dbReference type="ChEBI" id="CHEBI:15378"/>
        <dbReference type="ChEBI" id="CHEBI:15698"/>
        <dbReference type="ChEBI" id="CHEBI:57566"/>
        <dbReference type="ChEBI" id="CHEBI:57930"/>
        <dbReference type="ChEBI" id="CHEBI:61557"/>
        <dbReference type="EC" id="2.7.1.74"/>
    </reaction>
</comment>
<comment type="activity regulation">
    <text evidence="4">Deoxyadenosine inhibits deoxycytidine phosphorylation and deoxycytidine inhibits deoxyadenosine phosphorylation. Deoxyadenosine/deoxycytidine kinase is inhibited by both dATP and dCTP.</text>
</comment>
<comment type="biophysicochemical properties">
    <kinetics>
        <KM evidence="4">5 uM for deoxyadenosine (with GTP at pH 8.5 and at 37 degrees Celsius)</KM>
        <KM evidence="4">5 uM for deoxycytidine (with GTP at pH 8.5 and at 37 degrees Celsius)</KM>
        <KM evidence="4">65 uM for GTP (with deoxyadenosine or deoxycytidine at pH 7.8 and at 37 degrees Celsius)</KM>
    </kinetics>
    <phDependence>
        <text evidence="4">Optimum pH is around pH 8.6. At pH 8.0-9.6 more than 90% of maximal activity is still observed.</text>
    </phDependence>
</comment>
<comment type="subunit">
    <text evidence="3">Homodimer.</text>
</comment>
<comment type="similarity">
    <text evidence="5">Belongs to the DCK/DGK family.</text>
</comment>
<sequence length="217" mass="25444">MKEHHIPKNSIITVAGTVGVGKSTLTKTLAKRLGFKTSLEEVDHNPYLEKFYHDFERWSFHLQIYFLAERFKEQKTIFEAGGGFVQDRSIYEDTGIFAKMHADKGTMSKVDYKTYTSLFEAMVMTPYFPHPDVLIYLEGDLENILNRIEQRGREMELQTSRSYWEEMHTRYENWISGFNACPVLKLRIEDYDLLNDENSIENIVDQIASVIHDNQKK</sequence>
<gene>
    <name type="primary">dck</name>
    <name type="synonym">dak</name>
    <name type="synonym">yaaF</name>
    <name type="ordered locus">BSU00140</name>
</gene>
<proteinExistence type="evidence at protein level"/>
<reference key="1">
    <citation type="journal article" date="1994" name="DNA Res.">
        <title>Systematic sequencing of the 180 kilobase region of the Bacillus subtilis chromosome containing the replication origin.</title>
        <authorList>
            <person name="Ogasawara N."/>
            <person name="Nakai S."/>
            <person name="Yoshikawa H."/>
        </authorList>
    </citation>
    <scope>NUCLEOTIDE SEQUENCE [GENOMIC DNA]</scope>
    <source>
        <strain>168</strain>
    </source>
</reference>
<reference key="2">
    <citation type="journal article" date="1997" name="Nature">
        <title>The complete genome sequence of the Gram-positive bacterium Bacillus subtilis.</title>
        <authorList>
            <person name="Kunst F."/>
            <person name="Ogasawara N."/>
            <person name="Moszer I."/>
            <person name="Albertini A.M."/>
            <person name="Alloni G."/>
            <person name="Azevedo V."/>
            <person name="Bertero M.G."/>
            <person name="Bessieres P."/>
            <person name="Bolotin A."/>
            <person name="Borchert S."/>
            <person name="Borriss R."/>
            <person name="Boursier L."/>
            <person name="Brans A."/>
            <person name="Braun M."/>
            <person name="Brignell S.C."/>
            <person name="Bron S."/>
            <person name="Brouillet S."/>
            <person name="Bruschi C.V."/>
            <person name="Caldwell B."/>
            <person name="Capuano V."/>
            <person name="Carter N.M."/>
            <person name="Choi S.-K."/>
            <person name="Codani J.-J."/>
            <person name="Connerton I.F."/>
            <person name="Cummings N.J."/>
            <person name="Daniel R.A."/>
            <person name="Denizot F."/>
            <person name="Devine K.M."/>
            <person name="Duesterhoeft A."/>
            <person name="Ehrlich S.D."/>
            <person name="Emmerson P.T."/>
            <person name="Entian K.-D."/>
            <person name="Errington J."/>
            <person name="Fabret C."/>
            <person name="Ferrari E."/>
            <person name="Foulger D."/>
            <person name="Fritz C."/>
            <person name="Fujita M."/>
            <person name="Fujita Y."/>
            <person name="Fuma S."/>
            <person name="Galizzi A."/>
            <person name="Galleron N."/>
            <person name="Ghim S.-Y."/>
            <person name="Glaser P."/>
            <person name="Goffeau A."/>
            <person name="Golightly E.J."/>
            <person name="Grandi G."/>
            <person name="Guiseppi G."/>
            <person name="Guy B.J."/>
            <person name="Haga K."/>
            <person name="Haiech J."/>
            <person name="Harwood C.R."/>
            <person name="Henaut A."/>
            <person name="Hilbert H."/>
            <person name="Holsappel S."/>
            <person name="Hosono S."/>
            <person name="Hullo M.-F."/>
            <person name="Itaya M."/>
            <person name="Jones L.-M."/>
            <person name="Joris B."/>
            <person name="Karamata D."/>
            <person name="Kasahara Y."/>
            <person name="Klaerr-Blanchard M."/>
            <person name="Klein C."/>
            <person name="Kobayashi Y."/>
            <person name="Koetter P."/>
            <person name="Koningstein G."/>
            <person name="Krogh S."/>
            <person name="Kumano M."/>
            <person name="Kurita K."/>
            <person name="Lapidus A."/>
            <person name="Lardinois S."/>
            <person name="Lauber J."/>
            <person name="Lazarevic V."/>
            <person name="Lee S.-M."/>
            <person name="Levine A."/>
            <person name="Liu H."/>
            <person name="Masuda S."/>
            <person name="Mauel C."/>
            <person name="Medigue C."/>
            <person name="Medina N."/>
            <person name="Mellado R.P."/>
            <person name="Mizuno M."/>
            <person name="Moestl D."/>
            <person name="Nakai S."/>
            <person name="Noback M."/>
            <person name="Noone D."/>
            <person name="O'Reilly M."/>
            <person name="Ogawa K."/>
            <person name="Ogiwara A."/>
            <person name="Oudega B."/>
            <person name="Park S.-H."/>
            <person name="Parro V."/>
            <person name="Pohl T.M."/>
            <person name="Portetelle D."/>
            <person name="Porwollik S."/>
            <person name="Prescott A.M."/>
            <person name="Presecan E."/>
            <person name="Pujic P."/>
            <person name="Purnelle B."/>
            <person name="Rapoport G."/>
            <person name="Rey M."/>
            <person name="Reynolds S."/>
            <person name="Rieger M."/>
            <person name="Rivolta C."/>
            <person name="Rocha E."/>
            <person name="Roche B."/>
            <person name="Rose M."/>
            <person name="Sadaie Y."/>
            <person name="Sato T."/>
            <person name="Scanlan E."/>
            <person name="Schleich S."/>
            <person name="Schroeter R."/>
            <person name="Scoffone F."/>
            <person name="Sekiguchi J."/>
            <person name="Sekowska A."/>
            <person name="Seror S.J."/>
            <person name="Serror P."/>
            <person name="Shin B.-S."/>
            <person name="Soldo B."/>
            <person name="Sorokin A."/>
            <person name="Tacconi E."/>
            <person name="Takagi T."/>
            <person name="Takahashi H."/>
            <person name="Takemaru K."/>
            <person name="Takeuchi M."/>
            <person name="Tamakoshi A."/>
            <person name="Tanaka T."/>
            <person name="Terpstra P."/>
            <person name="Tognoni A."/>
            <person name="Tosato V."/>
            <person name="Uchiyama S."/>
            <person name="Vandenbol M."/>
            <person name="Vannier F."/>
            <person name="Vassarotti A."/>
            <person name="Viari A."/>
            <person name="Wambutt R."/>
            <person name="Wedler E."/>
            <person name="Wedler H."/>
            <person name="Weitzenegger T."/>
            <person name="Winters P."/>
            <person name="Wipat A."/>
            <person name="Yamamoto H."/>
            <person name="Yamane K."/>
            <person name="Yasumoto K."/>
            <person name="Yata K."/>
            <person name="Yoshida K."/>
            <person name="Yoshikawa H.-F."/>
            <person name="Zumstein E."/>
            <person name="Yoshikawa H."/>
            <person name="Danchin A."/>
        </authorList>
    </citation>
    <scope>NUCLEOTIDE SEQUENCE [LARGE SCALE GENOMIC DNA]</scope>
    <source>
        <strain>168</strain>
    </source>
</reference>
<reference key="3">
    <citation type="journal article" date="1980" name="J. Biol. Chem.">
        <title>Deoxyadenosine/deoxycytidine kinase from Bacillus subtilis. Purification, characterization, and physiological function.</title>
        <authorList>
            <person name="Moellgaard H."/>
        </authorList>
    </citation>
    <scope>FUNCTION</scope>
    <scope>BIOPHYSICOCHEMICAL PROPERTIES</scope>
    <scope>SUBSTRATE SPECIFICITY</scope>
    <scope>ACTIVITY REGULATION</scope>
</reference>
<reference key="4">
    <citation type="journal article" date="2001" name="J. Biol. Chem.">
        <title>Deoxynucleoside kinases encoded by the yaaG and yaaF genes of Bacillus subtilis. Substrate specificity and kinetic analysis of deoxyguanosine kinase with UTP as the preferred phosphate donor.</title>
        <authorList>
            <person name="Andersen R.B."/>
            <person name="Neuhard J."/>
        </authorList>
    </citation>
    <scope>NOMENCLATURE</scope>
    <scope>SUBUNIT</scope>
</reference>
<protein>
    <recommendedName>
        <fullName>Deoxyadenosine/deoxycytidine kinase</fullName>
        <shortName>dAK/dCK</shortName>
        <ecNumber>2.7.1.74</ecNumber>
        <ecNumber>2.7.1.76</ecNumber>
    </recommendedName>
</protein>
<dbReference type="EC" id="2.7.1.74"/>
<dbReference type="EC" id="2.7.1.76"/>
<dbReference type="EMBL" id="D26185">
    <property type="protein sequence ID" value="BAA05250.1"/>
    <property type="molecule type" value="Genomic_DNA"/>
</dbReference>
<dbReference type="EMBL" id="AL009126">
    <property type="protein sequence ID" value="CAB11790.1"/>
    <property type="molecule type" value="Genomic_DNA"/>
</dbReference>
<dbReference type="PIR" id="S66044">
    <property type="entry name" value="S66044"/>
</dbReference>
<dbReference type="RefSeq" id="NP_387895.1">
    <property type="nucleotide sequence ID" value="NC_000964.3"/>
</dbReference>
<dbReference type="RefSeq" id="WP_003226792.1">
    <property type="nucleotide sequence ID" value="NZ_OZ025638.1"/>
</dbReference>
<dbReference type="SMR" id="P37529"/>
<dbReference type="FunCoup" id="P37529">
    <property type="interactions" value="421"/>
</dbReference>
<dbReference type="STRING" id="224308.BSU00140"/>
<dbReference type="PaxDb" id="224308-BSU00140"/>
<dbReference type="EnsemblBacteria" id="CAB11790">
    <property type="protein sequence ID" value="CAB11790"/>
    <property type="gene ID" value="BSU_00140"/>
</dbReference>
<dbReference type="GeneID" id="86871231"/>
<dbReference type="GeneID" id="936793"/>
<dbReference type="KEGG" id="bsu:BSU00140"/>
<dbReference type="PATRIC" id="fig|224308.179.peg.14"/>
<dbReference type="eggNOG" id="COG1428">
    <property type="taxonomic scope" value="Bacteria"/>
</dbReference>
<dbReference type="InParanoid" id="P37529"/>
<dbReference type="OrthoDB" id="9776634at2"/>
<dbReference type="PhylomeDB" id="P37529"/>
<dbReference type="BioCyc" id="BSUB:BSU00140-MONOMER"/>
<dbReference type="BioCyc" id="MetaCyc:BSU00140-MONOMER"/>
<dbReference type="SABIO-RK" id="P37529"/>
<dbReference type="Proteomes" id="UP000001570">
    <property type="component" value="Chromosome"/>
</dbReference>
<dbReference type="GO" id="GO:0005737">
    <property type="term" value="C:cytoplasm"/>
    <property type="evidence" value="ECO:0000318"/>
    <property type="project" value="GO_Central"/>
</dbReference>
<dbReference type="GO" id="GO:0005524">
    <property type="term" value="F:ATP binding"/>
    <property type="evidence" value="ECO:0007669"/>
    <property type="project" value="UniProtKB-KW"/>
</dbReference>
<dbReference type="GO" id="GO:0004136">
    <property type="term" value="F:deoxyadenosine kinase activity"/>
    <property type="evidence" value="ECO:0007669"/>
    <property type="project" value="UniProtKB-EC"/>
</dbReference>
<dbReference type="GO" id="GO:0004137">
    <property type="term" value="F:deoxycytidine kinase activity"/>
    <property type="evidence" value="ECO:0007669"/>
    <property type="project" value="UniProtKB-EC"/>
</dbReference>
<dbReference type="GO" id="GO:0019136">
    <property type="term" value="F:deoxynucleoside kinase activity"/>
    <property type="evidence" value="ECO:0000318"/>
    <property type="project" value="GO_Central"/>
</dbReference>
<dbReference type="CDD" id="cd01673">
    <property type="entry name" value="dNK"/>
    <property type="match status" value="1"/>
</dbReference>
<dbReference type="FunFam" id="3.40.50.300:FF:000659">
    <property type="entry name" value="Deoxyguanosine kinase"/>
    <property type="match status" value="1"/>
</dbReference>
<dbReference type="Gene3D" id="3.40.50.300">
    <property type="entry name" value="P-loop containing nucleotide triphosphate hydrolases"/>
    <property type="match status" value="1"/>
</dbReference>
<dbReference type="InterPro" id="IPR002624">
    <property type="entry name" value="DCK/DGK"/>
</dbReference>
<dbReference type="InterPro" id="IPR050566">
    <property type="entry name" value="Deoxyribonucleoside_kinase"/>
</dbReference>
<dbReference type="InterPro" id="IPR031314">
    <property type="entry name" value="DNK_dom"/>
</dbReference>
<dbReference type="InterPro" id="IPR027417">
    <property type="entry name" value="P-loop_NTPase"/>
</dbReference>
<dbReference type="PANTHER" id="PTHR10513:SF35">
    <property type="entry name" value="DEOXYADENOSINE KINASE"/>
    <property type="match status" value="1"/>
</dbReference>
<dbReference type="PANTHER" id="PTHR10513">
    <property type="entry name" value="DEOXYNUCLEOSIDE KINASE"/>
    <property type="match status" value="1"/>
</dbReference>
<dbReference type="Pfam" id="PF01712">
    <property type="entry name" value="dNK"/>
    <property type="match status" value="1"/>
</dbReference>
<dbReference type="PIRSF" id="PIRSF000705">
    <property type="entry name" value="DNK"/>
    <property type="match status" value="1"/>
</dbReference>
<dbReference type="SUPFAM" id="SSF52540">
    <property type="entry name" value="P-loop containing nucleoside triphosphate hydrolases"/>
    <property type="match status" value="1"/>
</dbReference>
<feature type="chain" id="PRO_0000049430" description="Deoxyadenosine/deoxycytidine kinase">
    <location>
        <begin position="1"/>
        <end position="217"/>
    </location>
</feature>
<feature type="active site" description="Proton acceptor" evidence="2">
    <location>
        <position position="87"/>
    </location>
</feature>
<feature type="binding site" evidence="1">
    <location>
        <begin position="16"/>
        <end position="24"/>
    </location>
    <ligand>
        <name>ATP</name>
        <dbReference type="ChEBI" id="CHEBI:30616"/>
    </ligand>
</feature>
<feature type="binding site" evidence="1">
    <location>
        <position position="40"/>
    </location>
    <ligand>
        <name>substrate</name>
    </ligand>
</feature>
<feature type="binding site" evidence="1">
    <location>
        <position position="52"/>
    </location>
    <ligand>
        <name>substrate</name>
    </ligand>
</feature>
<feature type="binding site" evidence="1">
    <location>
        <position position="63"/>
    </location>
    <ligand>
        <name>substrate</name>
    </ligand>
</feature>
<feature type="binding site" evidence="1">
    <location>
        <position position="88"/>
    </location>
    <ligand>
        <name>substrate</name>
    </ligand>
</feature>
<feature type="binding site" evidence="1">
    <location>
        <position position="93"/>
    </location>
    <ligand>
        <name>substrate</name>
    </ligand>
</feature>
<feature type="binding site" evidence="1">
    <location>
        <position position="156"/>
    </location>
    <ligand>
        <name>substrate</name>
    </ligand>
</feature>